<reference key="1">
    <citation type="journal article" date="1996" name="Science">
        <title>Complete genome sequence of the methanogenic archaeon, Methanococcus jannaschii.</title>
        <authorList>
            <person name="Bult C.J."/>
            <person name="White O."/>
            <person name="Olsen G.J."/>
            <person name="Zhou L."/>
            <person name="Fleischmann R.D."/>
            <person name="Sutton G.G."/>
            <person name="Blake J.A."/>
            <person name="FitzGerald L.M."/>
            <person name="Clayton R.A."/>
            <person name="Gocayne J.D."/>
            <person name="Kerlavage A.R."/>
            <person name="Dougherty B.A."/>
            <person name="Tomb J.-F."/>
            <person name="Adams M.D."/>
            <person name="Reich C.I."/>
            <person name="Overbeek R."/>
            <person name="Kirkness E.F."/>
            <person name="Weinstock K.G."/>
            <person name="Merrick J.M."/>
            <person name="Glodek A."/>
            <person name="Scott J.L."/>
            <person name="Geoghagen N.S.M."/>
            <person name="Weidman J.F."/>
            <person name="Fuhrmann J.L."/>
            <person name="Nguyen D."/>
            <person name="Utterback T.R."/>
            <person name="Kelley J.M."/>
            <person name="Peterson J.D."/>
            <person name="Sadow P.W."/>
            <person name="Hanna M.C."/>
            <person name="Cotton M.D."/>
            <person name="Roberts K.M."/>
            <person name="Hurst M.A."/>
            <person name="Kaine B.P."/>
            <person name="Borodovsky M."/>
            <person name="Klenk H.-P."/>
            <person name="Fraser C.M."/>
            <person name="Smith H.O."/>
            <person name="Woese C.R."/>
            <person name="Venter J.C."/>
        </authorList>
    </citation>
    <scope>NUCLEOTIDE SEQUENCE [LARGE SCALE GENOMIC DNA]</scope>
    <source>
        <strain>ATCC 43067 / DSM 2661 / JAL-1 / JCM 10045 / NBRC 100440</strain>
    </source>
</reference>
<sequence length="418" mass="46652">MGKIVIEPLSRLEGHGKVTITLDENGKPKDVKLHITALRGFEQFVVGRPAEEVPRIVPRICGICQTAHHLASVKAIDAAWGVEIPEPAKKLRELMHIGNMIHSHALHFYFLAAPDFVLGPDADPAIRNIVGVIDKAPDVAKQAIALRKFGQKIVEAVGGKAIHPVTGIPGGQAKRLTEEERDELLKDADQMIEYAKNGVELIKQLNEQYMEQIKTLGVIDTYYLGLVKDGKHNFYDDTLRFLSPDGKEKVEFKPEEYLNYIGEYVVPYNYVKHPYYKKVGYPEGVYRVGPLAMLNVCDEMETPLAEEYRKEFLEIFGFPANQSLAYNHARLIELVEACEKAKILLEDNDITSDDIKADVEPKAGNGVGVVYAPRGVLIHNYETDENGIVVKANMIVATTHNVPTMEKAIQQAAQVIFK</sequence>
<evidence type="ECO:0000250" key="1"/>
<evidence type="ECO:0000255" key="2"/>
<evidence type="ECO:0000305" key="3"/>
<organism>
    <name type="scientific">Methanocaldococcus jannaschii (strain ATCC 43067 / DSM 2661 / JAL-1 / JCM 10045 / NBRC 100440)</name>
    <name type="common">Methanococcus jannaschii</name>
    <dbReference type="NCBI Taxonomy" id="243232"/>
    <lineage>
        <taxon>Archaea</taxon>
        <taxon>Methanobacteriati</taxon>
        <taxon>Methanobacteriota</taxon>
        <taxon>Methanomada group</taxon>
        <taxon>Methanococci</taxon>
        <taxon>Methanococcales</taxon>
        <taxon>Methanocaldococcaceae</taxon>
        <taxon>Methanocaldococcus</taxon>
    </lineage>
</organism>
<keyword id="KW-0479">Metal-binding</keyword>
<keyword id="KW-0533">Nickel</keyword>
<keyword id="KW-0560">Oxidoreductase</keyword>
<keyword id="KW-1185">Reference proteome</keyword>
<name>VHUA_METJA</name>
<dbReference type="EC" id="1.12.99.-"/>
<dbReference type="EMBL" id="L77117">
    <property type="protein sequence ID" value="AAB99194.1"/>
    <property type="molecule type" value="Genomic_DNA"/>
</dbReference>
<dbReference type="PIR" id="G64448">
    <property type="entry name" value="G64448"/>
</dbReference>
<dbReference type="RefSeq" id="WP_010870705.1">
    <property type="nucleotide sequence ID" value="NC_000909.1"/>
</dbReference>
<dbReference type="SMR" id="Q58592"/>
<dbReference type="FunCoup" id="Q58592">
    <property type="interactions" value="93"/>
</dbReference>
<dbReference type="STRING" id="243232.MJ_1192"/>
<dbReference type="PaxDb" id="243232-MJ_1192"/>
<dbReference type="EnsemblBacteria" id="AAB99194">
    <property type="protein sequence ID" value="AAB99194"/>
    <property type="gene ID" value="MJ_1192"/>
</dbReference>
<dbReference type="GeneID" id="1452611"/>
<dbReference type="KEGG" id="mja:MJ_1192"/>
<dbReference type="eggNOG" id="arCOG01549">
    <property type="taxonomic scope" value="Archaea"/>
</dbReference>
<dbReference type="HOGENOM" id="CLU_044556_0_0_2"/>
<dbReference type="InParanoid" id="Q58592"/>
<dbReference type="OrthoDB" id="42371at2157"/>
<dbReference type="PhylomeDB" id="Q58592"/>
<dbReference type="Proteomes" id="UP000000805">
    <property type="component" value="Chromosome"/>
</dbReference>
<dbReference type="GO" id="GO:0008901">
    <property type="term" value="F:ferredoxin hydrogenase activity"/>
    <property type="evidence" value="ECO:0007669"/>
    <property type="project" value="InterPro"/>
</dbReference>
<dbReference type="GO" id="GO:0016151">
    <property type="term" value="F:nickel cation binding"/>
    <property type="evidence" value="ECO:0007669"/>
    <property type="project" value="InterPro"/>
</dbReference>
<dbReference type="Gene3D" id="1.10.645.10">
    <property type="entry name" value="Cytochrome-c3 Hydrogenase, chain B"/>
    <property type="match status" value="1"/>
</dbReference>
<dbReference type="InterPro" id="IPR001501">
    <property type="entry name" value="Ni-dep_hyd_lsu"/>
</dbReference>
<dbReference type="InterPro" id="IPR018194">
    <property type="entry name" value="Ni-dep_hyd_lsu_Ni_BS"/>
</dbReference>
<dbReference type="InterPro" id="IPR029014">
    <property type="entry name" value="NiFe-Hase_large"/>
</dbReference>
<dbReference type="InterPro" id="IPR053511">
    <property type="entry name" value="NiFe/NiFeSe_hydrogenase_LSU"/>
</dbReference>
<dbReference type="NCBIfam" id="NF041785">
    <property type="entry name" value="VhuA"/>
    <property type="match status" value="1"/>
</dbReference>
<dbReference type="PANTHER" id="PTHR43600">
    <property type="entry name" value="COENZYME F420 HYDROGENASE, SUBUNIT ALPHA"/>
    <property type="match status" value="1"/>
</dbReference>
<dbReference type="PANTHER" id="PTHR43600:SF2">
    <property type="entry name" value="F420-NON-REDUCING HYDROGENASE VHU SUBUNIT A"/>
    <property type="match status" value="1"/>
</dbReference>
<dbReference type="Pfam" id="PF00374">
    <property type="entry name" value="NiFeSe_Hases"/>
    <property type="match status" value="2"/>
</dbReference>
<dbReference type="SUPFAM" id="SSF56762">
    <property type="entry name" value="HydB/Nqo4-like"/>
    <property type="match status" value="1"/>
</dbReference>
<dbReference type="PROSITE" id="PS00507">
    <property type="entry name" value="NI_HGENASE_L_1"/>
    <property type="match status" value="1"/>
</dbReference>
<accession>Q58592</accession>
<comment type="cofactor">
    <cofactor evidence="3">
        <name>Ni(2+)</name>
        <dbReference type="ChEBI" id="CHEBI:49786"/>
    </cofactor>
</comment>
<comment type="subunit">
    <text evidence="1">The F420-non-reducing hydrogenase vhu is composed of four subunits; VhuA, VhuD, VhuG and VhuU.</text>
</comment>
<comment type="miscellaneous">
    <text>The large subunit of Vhu is split into VhuA and VhuU. Each contributes two ligands to the [NiFeSe] center.</text>
</comment>
<comment type="similarity">
    <text evidence="3">Belongs to the [NiFe]/[NiFeSe] hydrogenase large subunit family.</text>
</comment>
<proteinExistence type="inferred from homology"/>
<protein>
    <recommendedName>
        <fullName>F420-non-reducing hydrogenase vhu subunit A</fullName>
        <ecNumber>1.12.99.-</ecNumber>
    </recommendedName>
</protein>
<feature type="chain" id="PRO_0000199730" description="F420-non-reducing hydrogenase vhu subunit A">
    <location>
        <begin position="1"/>
        <end position="418"/>
    </location>
</feature>
<feature type="binding site" evidence="2">
    <location>
        <position position="61"/>
    </location>
    <ligand>
        <name>Ni(2+)</name>
        <dbReference type="ChEBI" id="CHEBI:49786"/>
    </ligand>
</feature>
<feature type="binding site" evidence="2">
    <location>
        <position position="64"/>
    </location>
    <ligand>
        <name>Ni(2+)</name>
        <dbReference type="ChEBI" id="CHEBI:49786"/>
    </ligand>
</feature>
<gene>
    <name type="primary">vhuA</name>
    <name type="ordered locus">MJ1192</name>
</gene>